<name>KDSA_ACIBT</name>
<organism>
    <name type="scientific">Acinetobacter baumannii (strain ATCC 17978 / DSM 105126 / CIP 53.77 / LMG 1025 / NCDC KC755 / 5377)</name>
    <dbReference type="NCBI Taxonomy" id="400667"/>
    <lineage>
        <taxon>Bacteria</taxon>
        <taxon>Pseudomonadati</taxon>
        <taxon>Pseudomonadota</taxon>
        <taxon>Gammaproteobacteria</taxon>
        <taxon>Moraxellales</taxon>
        <taxon>Moraxellaceae</taxon>
        <taxon>Acinetobacter</taxon>
        <taxon>Acinetobacter calcoaceticus/baumannii complex</taxon>
    </lineage>
</organism>
<protein>
    <recommendedName>
        <fullName evidence="1">2-dehydro-3-deoxyphosphooctonate aldolase</fullName>
        <ecNumber evidence="1">2.5.1.55</ecNumber>
    </recommendedName>
    <alternativeName>
        <fullName evidence="1">3-deoxy-D-manno-octulosonic acid 8-phosphate synthase</fullName>
    </alternativeName>
    <alternativeName>
        <fullName evidence="1">KDO-8-phosphate synthase</fullName>
        <shortName evidence="1">KDO 8-P synthase</shortName>
        <shortName evidence="1">KDOPS</shortName>
    </alternativeName>
    <alternativeName>
        <fullName evidence="1">Phospho-2-dehydro-3-deoxyoctonate aldolase</fullName>
    </alternativeName>
</protein>
<reference key="1">
    <citation type="journal article" date="2007" name="Genes Dev.">
        <title>New insights into Acinetobacter baumannii pathogenesis revealed by high-density pyrosequencing and transposon mutagenesis.</title>
        <authorList>
            <person name="Smith M.G."/>
            <person name="Gianoulis T.A."/>
            <person name="Pukatzki S."/>
            <person name="Mekalanos J.J."/>
            <person name="Ornston L.N."/>
            <person name="Gerstein M."/>
            <person name="Snyder M."/>
        </authorList>
    </citation>
    <scope>NUCLEOTIDE SEQUENCE [LARGE SCALE GENOMIC DNA]</scope>
    <source>
        <strain>ATCC 17978 / DSM 105126 / CIP 53.77 / LMG 1025 / NCDC KC755 / 5377</strain>
    </source>
</reference>
<keyword id="KW-0963">Cytoplasm</keyword>
<keyword id="KW-0448">Lipopolysaccharide biosynthesis</keyword>
<keyword id="KW-0808">Transferase</keyword>
<gene>
    <name evidence="1" type="primary">kdsA</name>
    <name type="ordered locus">A1S_1899</name>
</gene>
<feature type="chain" id="PRO_1000091793" description="2-dehydro-3-deoxyphosphooctonate aldolase">
    <location>
        <begin position="1"/>
        <end position="285"/>
    </location>
</feature>
<accession>A3M5Y2</accession>
<sequence>MSQLKPQEVVRLGDIQMANHLPFVLFGGMNVLESKDLAFEIAETYIDICKRLDIPYVFKASFDKANRSSLHSFRGPGLEKGIEWLGDIKKHFNVPIITDVHEPYQAAPVAEVADIIQLPAFLSRQTDLVEAMAKTQAIINIKKAQFLAPHEMRHILHKCLEAGNDKLILCERGSAFGYNNLVVDMLGFDIMKEMNVPVFFDVTHALQTPGGRSDSAGGRRAQITTLARAGMATGLAGLFLESHPDPDKAKCDGPSALRLSQLEPFLAQLKELDTLVKGFKKLDTH</sequence>
<dbReference type="EC" id="2.5.1.55" evidence="1"/>
<dbReference type="EMBL" id="CP000521">
    <property type="protein sequence ID" value="ABO12326.2"/>
    <property type="molecule type" value="Genomic_DNA"/>
</dbReference>
<dbReference type="RefSeq" id="WP_000080538.1">
    <property type="nucleotide sequence ID" value="NZ_CP053098.1"/>
</dbReference>
<dbReference type="SMR" id="A3M5Y2"/>
<dbReference type="GeneID" id="92894150"/>
<dbReference type="KEGG" id="acb:A1S_1899"/>
<dbReference type="HOGENOM" id="CLU_036666_0_0_6"/>
<dbReference type="UniPathway" id="UPA00030"/>
<dbReference type="UniPathway" id="UPA00357">
    <property type="reaction ID" value="UER00474"/>
</dbReference>
<dbReference type="GO" id="GO:0005737">
    <property type="term" value="C:cytoplasm"/>
    <property type="evidence" value="ECO:0007669"/>
    <property type="project" value="UniProtKB-SubCell"/>
</dbReference>
<dbReference type="GO" id="GO:0008676">
    <property type="term" value="F:3-deoxy-8-phosphooctulonate synthase activity"/>
    <property type="evidence" value="ECO:0007669"/>
    <property type="project" value="UniProtKB-UniRule"/>
</dbReference>
<dbReference type="GO" id="GO:0019294">
    <property type="term" value="P:keto-3-deoxy-D-manno-octulosonic acid biosynthetic process"/>
    <property type="evidence" value="ECO:0007669"/>
    <property type="project" value="UniProtKB-UniRule"/>
</dbReference>
<dbReference type="Gene3D" id="3.20.20.70">
    <property type="entry name" value="Aldolase class I"/>
    <property type="match status" value="1"/>
</dbReference>
<dbReference type="HAMAP" id="MF_00056">
    <property type="entry name" value="KDO8P_synth"/>
    <property type="match status" value="1"/>
</dbReference>
<dbReference type="InterPro" id="IPR013785">
    <property type="entry name" value="Aldolase_TIM"/>
</dbReference>
<dbReference type="InterPro" id="IPR006218">
    <property type="entry name" value="DAHP1/KDSA"/>
</dbReference>
<dbReference type="InterPro" id="IPR006269">
    <property type="entry name" value="KDO8P_synthase"/>
</dbReference>
<dbReference type="NCBIfam" id="TIGR01362">
    <property type="entry name" value="KDO8P_synth"/>
    <property type="match status" value="1"/>
</dbReference>
<dbReference type="NCBIfam" id="NF003543">
    <property type="entry name" value="PRK05198.1"/>
    <property type="match status" value="1"/>
</dbReference>
<dbReference type="PANTHER" id="PTHR21057">
    <property type="entry name" value="PHOSPHO-2-DEHYDRO-3-DEOXYHEPTONATE ALDOLASE"/>
    <property type="match status" value="1"/>
</dbReference>
<dbReference type="Pfam" id="PF00793">
    <property type="entry name" value="DAHP_synth_1"/>
    <property type="match status" value="1"/>
</dbReference>
<dbReference type="SUPFAM" id="SSF51569">
    <property type="entry name" value="Aldolase"/>
    <property type="match status" value="1"/>
</dbReference>
<proteinExistence type="inferred from homology"/>
<comment type="catalytic activity">
    <reaction evidence="1">
        <text>D-arabinose 5-phosphate + phosphoenolpyruvate + H2O = 3-deoxy-alpha-D-manno-2-octulosonate-8-phosphate + phosphate</text>
        <dbReference type="Rhea" id="RHEA:14053"/>
        <dbReference type="ChEBI" id="CHEBI:15377"/>
        <dbReference type="ChEBI" id="CHEBI:43474"/>
        <dbReference type="ChEBI" id="CHEBI:57693"/>
        <dbReference type="ChEBI" id="CHEBI:58702"/>
        <dbReference type="ChEBI" id="CHEBI:85985"/>
        <dbReference type="EC" id="2.5.1.55"/>
    </reaction>
</comment>
<comment type="pathway">
    <text evidence="1">Carbohydrate biosynthesis; 3-deoxy-D-manno-octulosonate biosynthesis; 3-deoxy-D-manno-octulosonate from D-ribulose 5-phosphate: step 2/3.</text>
</comment>
<comment type="pathway">
    <text evidence="1">Bacterial outer membrane biogenesis; lipopolysaccharide biosynthesis.</text>
</comment>
<comment type="subcellular location">
    <subcellularLocation>
        <location evidence="1">Cytoplasm</location>
    </subcellularLocation>
</comment>
<comment type="similarity">
    <text evidence="1">Belongs to the KdsA family.</text>
</comment>
<evidence type="ECO:0000255" key="1">
    <source>
        <dbReference type="HAMAP-Rule" id="MF_00056"/>
    </source>
</evidence>